<organism>
    <name type="scientific">Synechococcus sp. (strain CC9311)</name>
    <dbReference type="NCBI Taxonomy" id="64471"/>
    <lineage>
        <taxon>Bacteria</taxon>
        <taxon>Bacillati</taxon>
        <taxon>Cyanobacteriota</taxon>
        <taxon>Cyanophyceae</taxon>
        <taxon>Synechococcales</taxon>
        <taxon>Synechococcaceae</taxon>
        <taxon>Synechococcus</taxon>
    </lineage>
</organism>
<comment type="function">
    <text evidence="1">Responsible for synthesis of pseudouridine from uracil-55 in the psi GC loop of transfer RNAs.</text>
</comment>
<comment type="catalytic activity">
    <reaction evidence="1">
        <text>uridine(55) in tRNA = pseudouridine(55) in tRNA</text>
        <dbReference type="Rhea" id="RHEA:42532"/>
        <dbReference type="Rhea" id="RHEA-COMP:10101"/>
        <dbReference type="Rhea" id="RHEA-COMP:10102"/>
        <dbReference type="ChEBI" id="CHEBI:65314"/>
        <dbReference type="ChEBI" id="CHEBI:65315"/>
        <dbReference type="EC" id="5.4.99.25"/>
    </reaction>
</comment>
<comment type="similarity">
    <text evidence="1">Belongs to the pseudouridine synthase TruB family. Type 1 subfamily.</text>
</comment>
<feature type="chain" id="PRO_1000084706" description="tRNA pseudouridine synthase B">
    <location>
        <begin position="1"/>
        <end position="297"/>
    </location>
</feature>
<feature type="active site" description="Nucleophile" evidence="1">
    <location>
        <position position="41"/>
    </location>
</feature>
<dbReference type="EC" id="5.4.99.25" evidence="1"/>
<dbReference type="EMBL" id="CP000435">
    <property type="protein sequence ID" value="ABI45949.1"/>
    <property type="molecule type" value="Genomic_DNA"/>
</dbReference>
<dbReference type="RefSeq" id="WP_011620143.1">
    <property type="nucleotide sequence ID" value="NC_008319.1"/>
</dbReference>
<dbReference type="SMR" id="Q0I7Z1"/>
<dbReference type="STRING" id="64471.sync_2233"/>
<dbReference type="KEGG" id="syg:sync_2233"/>
<dbReference type="eggNOG" id="COG0130">
    <property type="taxonomic scope" value="Bacteria"/>
</dbReference>
<dbReference type="HOGENOM" id="CLU_032087_0_0_3"/>
<dbReference type="OrthoDB" id="9802309at2"/>
<dbReference type="Proteomes" id="UP000001961">
    <property type="component" value="Chromosome"/>
</dbReference>
<dbReference type="GO" id="GO:0003723">
    <property type="term" value="F:RNA binding"/>
    <property type="evidence" value="ECO:0007669"/>
    <property type="project" value="InterPro"/>
</dbReference>
<dbReference type="GO" id="GO:0160148">
    <property type="term" value="F:tRNA pseudouridine(55) synthase activity"/>
    <property type="evidence" value="ECO:0007669"/>
    <property type="project" value="UniProtKB-EC"/>
</dbReference>
<dbReference type="GO" id="GO:1990481">
    <property type="term" value="P:mRNA pseudouridine synthesis"/>
    <property type="evidence" value="ECO:0007669"/>
    <property type="project" value="TreeGrafter"/>
</dbReference>
<dbReference type="GO" id="GO:0031119">
    <property type="term" value="P:tRNA pseudouridine synthesis"/>
    <property type="evidence" value="ECO:0007669"/>
    <property type="project" value="UniProtKB-UniRule"/>
</dbReference>
<dbReference type="CDD" id="cd02573">
    <property type="entry name" value="PseudoU_synth_EcTruB"/>
    <property type="match status" value="1"/>
</dbReference>
<dbReference type="Gene3D" id="3.30.2350.10">
    <property type="entry name" value="Pseudouridine synthase"/>
    <property type="match status" value="1"/>
</dbReference>
<dbReference type="HAMAP" id="MF_01080">
    <property type="entry name" value="TruB_bact"/>
    <property type="match status" value="1"/>
</dbReference>
<dbReference type="InterPro" id="IPR020103">
    <property type="entry name" value="PsdUridine_synth_cat_dom_sf"/>
</dbReference>
<dbReference type="InterPro" id="IPR002501">
    <property type="entry name" value="PsdUridine_synth_N"/>
</dbReference>
<dbReference type="InterPro" id="IPR014780">
    <property type="entry name" value="tRNA_psdUridine_synth_TruB"/>
</dbReference>
<dbReference type="InterPro" id="IPR032819">
    <property type="entry name" value="TruB_C"/>
</dbReference>
<dbReference type="NCBIfam" id="TIGR00431">
    <property type="entry name" value="TruB"/>
    <property type="match status" value="1"/>
</dbReference>
<dbReference type="PANTHER" id="PTHR13767:SF2">
    <property type="entry name" value="PSEUDOURIDYLATE SYNTHASE TRUB1"/>
    <property type="match status" value="1"/>
</dbReference>
<dbReference type="PANTHER" id="PTHR13767">
    <property type="entry name" value="TRNA-PSEUDOURIDINE SYNTHASE"/>
    <property type="match status" value="1"/>
</dbReference>
<dbReference type="Pfam" id="PF16198">
    <property type="entry name" value="TruB_C_2"/>
    <property type="match status" value="1"/>
</dbReference>
<dbReference type="Pfam" id="PF01509">
    <property type="entry name" value="TruB_N"/>
    <property type="match status" value="1"/>
</dbReference>
<dbReference type="SUPFAM" id="SSF55120">
    <property type="entry name" value="Pseudouridine synthase"/>
    <property type="match status" value="1"/>
</dbReference>
<gene>
    <name evidence="1" type="primary">truB</name>
    <name type="ordered locus">sync_2233</name>
</gene>
<proteinExistence type="inferred from homology"/>
<reference key="1">
    <citation type="journal article" date="2006" name="Proc. Natl. Acad. Sci. U.S.A.">
        <title>Genome sequence of Synechococcus CC9311: insights into adaptation to a coastal environment.</title>
        <authorList>
            <person name="Palenik B."/>
            <person name="Ren Q."/>
            <person name="Dupont C.L."/>
            <person name="Myers G.S."/>
            <person name="Heidelberg J.F."/>
            <person name="Badger J.H."/>
            <person name="Madupu R."/>
            <person name="Nelson W.C."/>
            <person name="Brinkac L.M."/>
            <person name="Dodson R.J."/>
            <person name="Durkin A.S."/>
            <person name="Daugherty S.C."/>
            <person name="Sullivan S.A."/>
            <person name="Khouri H."/>
            <person name="Mohamoud Y."/>
            <person name="Halpin R."/>
            <person name="Paulsen I.T."/>
        </authorList>
    </citation>
    <scope>NUCLEOTIDE SEQUENCE [LARGE SCALE GENOMIC DNA]</scope>
    <source>
        <strain>CC9311</strain>
    </source>
</reference>
<protein>
    <recommendedName>
        <fullName evidence="1">tRNA pseudouridine synthase B</fullName>
        <ecNumber evidence="1">5.4.99.25</ecNumber>
    </recommendedName>
    <alternativeName>
        <fullName evidence="1">tRNA pseudouridine(55) synthase</fullName>
        <shortName evidence="1">Psi55 synthase</shortName>
    </alternativeName>
    <alternativeName>
        <fullName evidence="1">tRNA pseudouridylate synthase</fullName>
    </alternativeName>
    <alternativeName>
        <fullName evidence="1">tRNA-uridine isomerase</fullName>
    </alternativeName>
</protein>
<sequence length="297" mass="32094">MDAPLGFVVIDKPSGLTSHACVSRMRRVLQTKRVGHGGTLDPAVTGVLPIAVGQATRLLPYLPGEKTYRGVIQLGTSTSTDDLQGEIVAVQNWPDLSVEEMDQALNPFRGTIEQCPPQVSAVHVNGERAYARARRGEVIDLPARPVTIHSLSLEHWDFEQGKLTLEVHCSAGTYIRSLARDLGQALGCGGCLDSLRRTQALGFVEAHAIALPVHPNEQSGPSLEPLTLIPPQLALKHLPIRTLSELERDDWSCGRTIPHQNGDGPTVVLSEDNIMLGIGLANSEAQLRPKVVFEARG</sequence>
<keyword id="KW-0413">Isomerase</keyword>
<keyword id="KW-1185">Reference proteome</keyword>
<keyword id="KW-0819">tRNA processing</keyword>
<name>TRUB_SYNS3</name>
<evidence type="ECO:0000255" key="1">
    <source>
        <dbReference type="HAMAP-Rule" id="MF_01080"/>
    </source>
</evidence>
<accession>Q0I7Z1</accession>